<gene>
    <name type="primary">dinB2</name>
    <name type="ordered locus">mlr1877</name>
</gene>
<proteinExistence type="inferred from homology"/>
<evidence type="ECO:0000250" key="1"/>
<evidence type="ECO:0000305" key="2"/>
<keyword id="KW-0963">Cytoplasm</keyword>
<keyword id="KW-0227">DNA damage</keyword>
<keyword id="KW-0234">DNA repair</keyword>
<keyword id="KW-0235">DNA replication</keyword>
<keyword id="KW-0238">DNA-binding</keyword>
<keyword id="KW-0239">DNA-directed DNA polymerase</keyword>
<keyword id="KW-0460">Magnesium</keyword>
<keyword id="KW-0479">Metal-binding</keyword>
<keyword id="KW-0515">Mutator protein</keyword>
<keyword id="KW-0548">Nucleotidyltransferase</keyword>
<keyword id="KW-0808">Transferase</keyword>
<protein>
    <recommendedName>
        <fullName>DNA polymerase IV 2</fullName>
        <shortName>Pol IV 2</shortName>
        <ecNumber>2.7.7.7</ecNumber>
    </recommendedName>
</protein>
<comment type="function">
    <text evidence="1">Poorly processive, error-prone DNA polymerase involved in untargeted mutagenesis. Copies undamaged DNA at stalled replication forks, which arise in vivo from mismatched or misaligned primer ends. These misaligned primers can be extended by PolIV. Exhibits no 3'-5' exonuclease (proofreading) activity. May be involved in translesional synthesis, in conjunction with the beta clamp from PolIII (By similarity).</text>
</comment>
<comment type="catalytic activity">
    <reaction>
        <text>DNA(n) + a 2'-deoxyribonucleoside 5'-triphosphate = DNA(n+1) + diphosphate</text>
        <dbReference type="Rhea" id="RHEA:22508"/>
        <dbReference type="Rhea" id="RHEA-COMP:17339"/>
        <dbReference type="Rhea" id="RHEA-COMP:17340"/>
        <dbReference type="ChEBI" id="CHEBI:33019"/>
        <dbReference type="ChEBI" id="CHEBI:61560"/>
        <dbReference type="ChEBI" id="CHEBI:173112"/>
        <dbReference type="EC" id="2.7.7.7"/>
    </reaction>
</comment>
<comment type="cofactor">
    <cofactor evidence="1">
        <name>Mg(2+)</name>
        <dbReference type="ChEBI" id="CHEBI:18420"/>
    </cofactor>
    <text evidence="1">Binds 2 magnesium ions per subunit.</text>
</comment>
<comment type="subunit">
    <text evidence="1">Monomer.</text>
</comment>
<comment type="subcellular location">
    <subcellularLocation>
        <location evidence="1">Cytoplasm</location>
    </subcellularLocation>
</comment>
<comment type="similarity">
    <text evidence="2">Belongs to the DNA polymerase type-Y family.</text>
</comment>
<feature type="chain" id="PRO_0000173937" description="DNA polymerase IV 2">
    <location>
        <begin position="1"/>
        <end position="415"/>
    </location>
</feature>
<feature type="domain" description="UmuC">
    <location>
        <begin position="7"/>
        <end position="183"/>
    </location>
</feature>
<feature type="active site" evidence="1">
    <location>
        <position position="102"/>
    </location>
</feature>
<feature type="binding site" evidence="1">
    <location>
        <position position="11"/>
    </location>
    <ligand>
        <name>Mg(2+)</name>
        <dbReference type="ChEBI" id="CHEBI:18420"/>
    </ligand>
</feature>
<feature type="binding site" evidence="1">
    <location>
        <position position="101"/>
    </location>
    <ligand>
        <name>Mg(2+)</name>
        <dbReference type="ChEBI" id="CHEBI:18420"/>
    </ligand>
</feature>
<feature type="site" description="Substrate discrimination" evidence="1">
    <location>
        <position position="16"/>
    </location>
</feature>
<dbReference type="EC" id="2.7.7.7"/>
<dbReference type="EMBL" id="BA000012">
    <property type="protein sequence ID" value="BAB49140.1"/>
    <property type="molecule type" value="Genomic_DNA"/>
</dbReference>
<dbReference type="SMR" id="Q98JM5"/>
<dbReference type="KEGG" id="mlo:mlr1877"/>
<dbReference type="eggNOG" id="COG0389">
    <property type="taxonomic scope" value="Bacteria"/>
</dbReference>
<dbReference type="HOGENOM" id="CLU_012348_1_2_5"/>
<dbReference type="Proteomes" id="UP000000552">
    <property type="component" value="Chromosome"/>
</dbReference>
<dbReference type="GO" id="GO:0005829">
    <property type="term" value="C:cytosol"/>
    <property type="evidence" value="ECO:0007669"/>
    <property type="project" value="TreeGrafter"/>
</dbReference>
<dbReference type="GO" id="GO:0003684">
    <property type="term" value="F:damaged DNA binding"/>
    <property type="evidence" value="ECO:0007669"/>
    <property type="project" value="InterPro"/>
</dbReference>
<dbReference type="GO" id="GO:0003887">
    <property type="term" value="F:DNA-directed DNA polymerase activity"/>
    <property type="evidence" value="ECO:0007669"/>
    <property type="project" value="UniProtKB-UniRule"/>
</dbReference>
<dbReference type="GO" id="GO:0000287">
    <property type="term" value="F:magnesium ion binding"/>
    <property type="evidence" value="ECO:0007669"/>
    <property type="project" value="UniProtKB-UniRule"/>
</dbReference>
<dbReference type="GO" id="GO:0006261">
    <property type="term" value="P:DNA-templated DNA replication"/>
    <property type="evidence" value="ECO:0007669"/>
    <property type="project" value="UniProtKB-UniRule"/>
</dbReference>
<dbReference type="GO" id="GO:0042276">
    <property type="term" value="P:error-prone translesion synthesis"/>
    <property type="evidence" value="ECO:0007669"/>
    <property type="project" value="TreeGrafter"/>
</dbReference>
<dbReference type="GO" id="GO:0009432">
    <property type="term" value="P:SOS response"/>
    <property type="evidence" value="ECO:0007669"/>
    <property type="project" value="TreeGrafter"/>
</dbReference>
<dbReference type="CDD" id="cd03586">
    <property type="entry name" value="PolY_Pol_IV_kappa"/>
    <property type="match status" value="1"/>
</dbReference>
<dbReference type="Gene3D" id="3.30.70.270">
    <property type="match status" value="1"/>
</dbReference>
<dbReference type="Gene3D" id="3.40.1170.60">
    <property type="match status" value="1"/>
</dbReference>
<dbReference type="Gene3D" id="1.10.150.20">
    <property type="entry name" value="5' to 3' exonuclease, C-terminal subdomain"/>
    <property type="match status" value="1"/>
</dbReference>
<dbReference type="Gene3D" id="3.30.1490.100">
    <property type="entry name" value="DNA polymerase, Y-family, little finger domain"/>
    <property type="match status" value="1"/>
</dbReference>
<dbReference type="HAMAP" id="MF_01113">
    <property type="entry name" value="DNApol_IV"/>
    <property type="match status" value="1"/>
</dbReference>
<dbReference type="InterPro" id="IPR043502">
    <property type="entry name" value="DNA/RNA_pol_sf"/>
</dbReference>
<dbReference type="InterPro" id="IPR036775">
    <property type="entry name" value="DNA_pol_Y-fam_lit_finger_sf"/>
</dbReference>
<dbReference type="InterPro" id="IPR017961">
    <property type="entry name" value="DNA_pol_Y-fam_little_finger"/>
</dbReference>
<dbReference type="InterPro" id="IPR050116">
    <property type="entry name" value="DNA_polymerase-Y"/>
</dbReference>
<dbReference type="InterPro" id="IPR022880">
    <property type="entry name" value="DNApol_IV"/>
</dbReference>
<dbReference type="InterPro" id="IPR043128">
    <property type="entry name" value="Rev_trsase/Diguanyl_cyclase"/>
</dbReference>
<dbReference type="InterPro" id="IPR001126">
    <property type="entry name" value="UmuC"/>
</dbReference>
<dbReference type="NCBIfam" id="NF002677">
    <property type="entry name" value="PRK02406.1"/>
    <property type="match status" value="1"/>
</dbReference>
<dbReference type="NCBIfam" id="NF003015">
    <property type="entry name" value="PRK03858.1"/>
    <property type="match status" value="1"/>
</dbReference>
<dbReference type="PANTHER" id="PTHR11076:SF33">
    <property type="entry name" value="DNA POLYMERASE KAPPA"/>
    <property type="match status" value="1"/>
</dbReference>
<dbReference type="PANTHER" id="PTHR11076">
    <property type="entry name" value="DNA REPAIR POLYMERASE UMUC / TRANSFERASE FAMILY MEMBER"/>
    <property type="match status" value="1"/>
</dbReference>
<dbReference type="Pfam" id="PF00817">
    <property type="entry name" value="IMS"/>
    <property type="match status" value="1"/>
</dbReference>
<dbReference type="Pfam" id="PF11799">
    <property type="entry name" value="IMS_C"/>
    <property type="match status" value="1"/>
</dbReference>
<dbReference type="SUPFAM" id="SSF56672">
    <property type="entry name" value="DNA/RNA polymerases"/>
    <property type="match status" value="1"/>
</dbReference>
<dbReference type="SUPFAM" id="SSF100879">
    <property type="entry name" value="Lesion bypass DNA polymerase (Y-family), little finger domain"/>
    <property type="match status" value="1"/>
</dbReference>
<dbReference type="PROSITE" id="PS50173">
    <property type="entry name" value="UMUC"/>
    <property type="match status" value="1"/>
</dbReference>
<name>DPO42_RHILO</name>
<reference key="1">
    <citation type="journal article" date="2000" name="DNA Res.">
        <title>Complete genome structure of the nitrogen-fixing symbiotic bacterium Mesorhizobium loti.</title>
        <authorList>
            <person name="Kaneko T."/>
            <person name="Nakamura Y."/>
            <person name="Sato S."/>
            <person name="Asamizu E."/>
            <person name="Kato T."/>
            <person name="Sasamoto S."/>
            <person name="Watanabe A."/>
            <person name="Idesawa K."/>
            <person name="Ishikawa A."/>
            <person name="Kawashima K."/>
            <person name="Kimura T."/>
            <person name="Kishida Y."/>
            <person name="Kiyokawa C."/>
            <person name="Kohara M."/>
            <person name="Matsumoto M."/>
            <person name="Matsuno A."/>
            <person name="Mochizuki Y."/>
            <person name="Nakayama S."/>
            <person name="Nakazaki N."/>
            <person name="Shimpo S."/>
            <person name="Sugimoto M."/>
            <person name="Takeuchi C."/>
            <person name="Yamada M."/>
            <person name="Tabata S."/>
        </authorList>
    </citation>
    <scope>NUCLEOTIDE SEQUENCE [LARGE SCALE GENOMIC DNA]</scope>
    <source>
        <strain>LMG 29417 / CECT 9101 / MAFF 303099</strain>
    </source>
</reference>
<accession>Q98JM5</accession>
<sequence length="415" mass="44508">METTATILHADLDAFYASVEQLLDPSLRGKPIAVGGGVVLAASYEARAFGVRGGMPGRKARELCPQLIFVGGNFSHYQRLGDAAIKVLDDFTPVVERISIDEAFADVAGCTHLFGQPRDIATAIRHRVRAELGLPISIGVARTKHLAKIASQVAKPDGLVVVDPGTELDFLHDLPVSLMWGVGPATKSRLAEIGIQTIGELARTHSGALTRLLGPAAGEKLAALAWNRDPRKLETRRRAHSAGAQSALGQKPAVARVIVPTLLHLADRVASRLRAKARPGRTVTVRVRFADLSAVTRSITLDQPISATTMLAEIAGDLVRGVLADHPREKTISLLAISVSHLEESAELQLDLPLGLADEKRRPGSKKGLARFGADRAIDKIRERFGKQAVGYGTVALEAARSVPDEFRELAEKEL</sequence>
<organism>
    <name type="scientific">Mesorhizobium japonicum (strain LMG 29417 / CECT 9101 / MAFF 303099)</name>
    <name type="common">Mesorhizobium loti (strain MAFF 303099)</name>
    <dbReference type="NCBI Taxonomy" id="266835"/>
    <lineage>
        <taxon>Bacteria</taxon>
        <taxon>Pseudomonadati</taxon>
        <taxon>Pseudomonadota</taxon>
        <taxon>Alphaproteobacteria</taxon>
        <taxon>Hyphomicrobiales</taxon>
        <taxon>Phyllobacteriaceae</taxon>
        <taxon>Mesorhizobium</taxon>
    </lineage>
</organism>